<reference key="1">
    <citation type="journal article" date="2008" name="J. Bacteriol.">
        <title>Genome sequence of the streptomycin-producing microorganism Streptomyces griseus IFO 13350.</title>
        <authorList>
            <person name="Ohnishi Y."/>
            <person name="Ishikawa J."/>
            <person name="Hara H."/>
            <person name="Suzuki H."/>
            <person name="Ikenoya M."/>
            <person name="Ikeda H."/>
            <person name="Yamashita A."/>
            <person name="Hattori M."/>
            <person name="Horinouchi S."/>
        </authorList>
    </citation>
    <scope>NUCLEOTIDE SEQUENCE [LARGE SCALE GENOMIC DNA]</scope>
    <source>
        <strain>JCM 4626 / CBS 651.72 / NBRC 13350 / KCC S-0626 / ISP 5235</strain>
    </source>
</reference>
<feature type="chain" id="PRO_0000367775" description="Glutamate--tRNA ligase">
    <location>
        <begin position="1"/>
        <end position="504"/>
    </location>
</feature>
<feature type="short sequence motif" description="'HIGH' region" evidence="1">
    <location>
        <begin position="25"/>
        <end position="35"/>
    </location>
</feature>
<feature type="short sequence motif" description="'KMSKS' region" evidence="1">
    <location>
        <begin position="270"/>
        <end position="274"/>
    </location>
</feature>
<feature type="binding site" evidence="1">
    <location>
        <position position="122"/>
    </location>
    <ligand>
        <name>Zn(2+)</name>
        <dbReference type="ChEBI" id="CHEBI:29105"/>
    </ligand>
</feature>
<feature type="binding site" evidence="1">
    <location>
        <position position="124"/>
    </location>
    <ligand>
        <name>Zn(2+)</name>
        <dbReference type="ChEBI" id="CHEBI:29105"/>
    </ligand>
</feature>
<feature type="binding site" evidence="1">
    <location>
        <position position="149"/>
    </location>
    <ligand>
        <name>Zn(2+)</name>
        <dbReference type="ChEBI" id="CHEBI:29105"/>
    </ligand>
</feature>
<feature type="binding site" evidence="1">
    <location>
        <position position="151"/>
    </location>
    <ligand>
        <name>Zn(2+)</name>
        <dbReference type="ChEBI" id="CHEBI:29105"/>
    </ligand>
</feature>
<feature type="binding site" evidence="1">
    <location>
        <position position="273"/>
    </location>
    <ligand>
        <name>ATP</name>
        <dbReference type="ChEBI" id="CHEBI:30616"/>
    </ligand>
</feature>
<accession>B1VZ06</accession>
<protein>
    <recommendedName>
        <fullName evidence="1">Glutamate--tRNA ligase</fullName>
        <ecNumber evidence="1">6.1.1.17</ecNumber>
    </recommendedName>
    <alternativeName>
        <fullName evidence="1">Glutamyl-tRNA synthetase</fullName>
        <shortName evidence="1">GluRS</shortName>
    </alternativeName>
</protein>
<evidence type="ECO:0000255" key="1">
    <source>
        <dbReference type="HAMAP-Rule" id="MF_00022"/>
    </source>
</evidence>
<name>SYE_STRGG</name>
<comment type="function">
    <text evidence="1">Catalyzes the attachment of glutamate to tRNA(Glu) in a two-step reaction: glutamate is first activated by ATP to form Glu-AMP and then transferred to the acceptor end of tRNA(Glu).</text>
</comment>
<comment type="catalytic activity">
    <reaction evidence="1">
        <text>tRNA(Glu) + L-glutamate + ATP = L-glutamyl-tRNA(Glu) + AMP + diphosphate</text>
        <dbReference type="Rhea" id="RHEA:23540"/>
        <dbReference type="Rhea" id="RHEA-COMP:9663"/>
        <dbReference type="Rhea" id="RHEA-COMP:9680"/>
        <dbReference type="ChEBI" id="CHEBI:29985"/>
        <dbReference type="ChEBI" id="CHEBI:30616"/>
        <dbReference type="ChEBI" id="CHEBI:33019"/>
        <dbReference type="ChEBI" id="CHEBI:78442"/>
        <dbReference type="ChEBI" id="CHEBI:78520"/>
        <dbReference type="ChEBI" id="CHEBI:456215"/>
        <dbReference type="EC" id="6.1.1.17"/>
    </reaction>
</comment>
<comment type="cofactor">
    <cofactor evidence="1">
        <name>Zn(2+)</name>
        <dbReference type="ChEBI" id="CHEBI:29105"/>
    </cofactor>
    <text evidence="1">Binds 1 zinc ion per subunit.</text>
</comment>
<comment type="subunit">
    <text evidence="1">Monomer.</text>
</comment>
<comment type="subcellular location">
    <subcellularLocation>
        <location evidence="1">Cytoplasm</location>
    </subcellularLocation>
</comment>
<comment type="similarity">
    <text evidence="1">Belongs to the class-I aminoacyl-tRNA synthetase family. Glutamate--tRNA ligase type 1 subfamily.</text>
</comment>
<sequence>MANAPFPKLSASLDQGRPHRVRFCPSPTGNPHVGLVRTALFNWAFARHHQGTLVFRIEDTDAARDSEESYQQLLDSMRWLGLDWDEGPEIGGPHAPYRQSQRMDLYKDVAEKLLAAGYAYPCYCTTEELDTRRDAARAAGKPSGYDGHCRDLTAEQKAAYEAEGRTSIVRFRMPDEAITFTDLVRGEITVQPENVPDYGIVRANGAPLYTLVNPVDDALMEITHVLRGEDLLSSTPRQIALYRALIELGIAKDTPAFGHLPYVMGEGNKKLSKRDPQASLNLYRERGFLPEGLLNYLSLLGWSIAEDRDIFSMDELVAAFDIKDVNANPARFDLKKCEHINAEHIRMLDVKTFTEACGPWLKAPFAPWAPEAFDAEKWTRIAPYAQTRVTVLSDITDNVDFLFLDEPVEDEASWTKAMKGDPVALLTTARANLEAADWSDPESLKNAVLTAGEAHGLKLGKAQAPVRVAVTGRTVGLPLFESLEILGRDRSLARVDAALAKLTA</sequence>
<proteinExistence type="inferred from homology"/>
<organism>
    <name type="scientific">Streptomyces griseus subsp. griseus (strain JCM 4626 / CBS 651.72 / NBRC 13350 / KCC S-0626 / ISP 5235)</name>
    <dbReference type="NCBI Taxonomy" id="455632"/>
    <lineage>
        <taxon>Bacteria</taxon>
        <taxon>Bacillati</taxon>
        <taxon>Actinomycetota</taxon>
        <taxon>Actinomycetes</taxon>
        <taxon>Kitasatosporales</taxon>
        <taxon>Streptomycetaceae</taxon>
        <taxon>Streptomyces</taxon>
    </lineage>
</organism>
<dbReference type="EC" id="6.1.1.17" evidence="1"/>
<dbReference type="EMBL" id="AP009493">
    <property type="protein sequence ID" value="BAG18761.1"/>
    <property type="molecule type" value="Genomic_DNA"/>
</dbReference>
<dbReference type="RefSeq" id="WP_012378869.1">
    <property type="nucleotide sequence ID" value="NC_010572.1"/>
</dbReference>
<dbReference type="SMR" id="B1VZ06"/>
<dbReference type="KEGG" id="sgr:SGR_1932"/>
<dbReference type="eggNOG" id="COG0008">
    <property type="taxonomic scope" value="Bacteria"/>
</dbReference>
<dbReference type="HOGENOM" id="CLU_015768_6_1_11"/>
<dbReference type="Proteomes" id="UP000001685">
    <property type="component" value="Chromosome"/>
</dbReference>
<dbReference type="GO" id="GO:0005829">
    <property type="term" value="C:cytosol"/>
    <property type="evidence" value="ECO:0007669"/>
    <property type="project" value="TreeGrafter"/>
</dbReference>
<dbReference type="GO" id="GO:0005524">
    <property type="term" value="F:ATP binding"/>
    <property type="evidence" value="ECO:0007669"/>
    <property type="project" value="UniProtKB-UniRule"/>
</dbReference>
<dbReference type="GO" id="GO:0004818">
    <property type="term" value="F:glutamate-tRNA ligase activity"/>
    <property type="evidence" value="ECO:0007669"/>
    <property type="project" value="UniProtKB-UniRule"/>
</dbReference>
<dbReference type="GO" id="GO:0000049">
    <property type="term" value="F:tRNA binding"/>
    <property type="evidence" value="ECO:0007669"/>
    <property type="project" value="InterPro"/>
</dbReference>
<dbReference type="GO" id="GO:0008270">
    <property type="term" value="F:zinc ion binding"/>
    <property type="evidence" value="ECO:0007669"/>
    <property type="project" value="UniProtKB-UniRule"/>
</dbReference>
<dbReference type="GO" id="GO:0006424">
    <property type="term" value="P:glutamyl-tRNA aminoacylation"/>
    <property type="evidence" value="ECO:0007669"/>
    <property type="project" value="UniProtKB-UniRule"/>
</dbReference>
<dbReference type="CDD" id="cd00808">
    <property type="entry name" value="GluRS_core"/>
    <property type="match status" value="1"/>
</dbReference>
<dbReference type="FunFam" id="3.40.50.620:FF:000149">
    <property type="entry name" value="Glutamate--tRNA ligase"/>
    <property type="match status" value="1"/>
</dbReference>
<dbReference type="Gene3D" id="1.10.10.350">
    <property type="match status" value="1"/>
</dbReference>
<dbReference type="Gene3D" id="3.40.50.620">
    <property type="entry name" value="HUPs"/>
    <property type="match status" value="1"/>
</dbReference>
<dbReference type="HAMAP" id="MF_00022">
    <property type="entry name" value="Glu_tRNA_synth_type1"/>
    <property type="match status" value="1"/>
</dbReference>
<dbReference type="InterPro" id="IPR045462">
    <property type="entry name" value="aa-tRNA-synth_I_cd-bd"/>
</dbReference>
<dbReference type="InterPro" id="IPR020751">
    <property type="entry name" value="aa-tRNA-synth_I_codon-bd_sub2"/>
</dbReference>
<dbReference type="InterPro" id="IPR008925">
    <property type="entry name" value="aa_tRNA-synth_I_cd-bd_sf"/>
</dbReference>
<dbReference type="InterPro" id="IPR004527">
    <property type="entry name" value="Glu-tRNA-ligase_bac/mito"/>
</dbReference>
<dbReference type="InterPro" id="IPR000924">
    <property type="entry name" value="Glu/Gln-tRNA-synth"/>
</dbReference>
<dbReference type="InterPro" id="IPR020058">
    <property type="entry name" value="Glu/Gln-tRNA-synth_Ib_cat-dom"/>
</dbReference>
<dbReference type="InterPro" id="IPR049940">
    <property type="entry name" value="GluQ/Sye"/>
</dbReference>
<dbReference type="InterPro" id="IPR033910">
    <property type="entry name" value="GluRS_core"/>
</dbReference>
<dbReference type="InterPro" id="IPR014729">
    <property type="entry name" value="Rossmann-like_a/b/a_fold"/>
</dbReference>
<dbReference type="NCBIfam" id="TIGR00464">
    <property type="entry name" value="gltX_bact"/>
    <property type="match status" value="1"/>
</dbReference>
<dbReference type="PANTHER" id="PTHR43311">
    <property type="entry name" value="GLUTAMATE--TRNA LIGASE"/>
    <property type="match status" value="1"/>
</dbReference>
<dbReference type="PANTHER" id="PTHR43311:SF2">
    <property type="entry name" value="GLUTAMATE--TRNA LIGASE, MITOCHONDRIAL-RELATED"/>
    <property type="match status" value="1"/>
</dbReference>
<dbReference type="Pfam" id="PF19269">
    <property type="entry name" value="Anticodon_2"/>
    <property type="match status" value="1"/>
</dbReference>
<dbReference type="Pfam" id="PF00749">
    <property type="entry name" value="tRNA-synt_1c"/>
    <property type="match status" value="1"/>
</dbReference>
<dbReference type="PRINTS" id="PR00987">
    <property type="entry name" value="TRNASYNTHGLU"/>
</dbReference>
<dbReference type="SUPFAM" id="SSF48163">
    <property type="entry name" value="An anticodon-binding domain of class I aminoacyl-tRNA synthetases"/>
    <property type="match status" value="1"/>
</dbReference>
<dbReference type="SUPFAM" id="SSF52374">
    <property type="entry name" value="Nucleotidylyl transferase"/>
    <property type="match status" value="1"/>
</dbReference>
<keyword id="KW-0030">Aminoacyl-tRNA synthetase</keyword>
<keyword id="KW-0067">ATP-binding</keyword>
<keyword id="KW-0963">Cytoplasm</keyword>
<keyword id="KW-0436">Ligase</keyword>
<keyword id="KW-0479">Metal-binding</keyword>
<keyword id="KW-0547">Nucleotide-binding</keyword>
<keyword id="KW-0648">Protein biosynthesis</keyword>
<keyword id="KW-0862">Zinc</keyword>
<gene>
    <name evidence="1" type="primary">gltX</name>
    <name type="ordered locus">SGR_1932</name>
</gene>